<proteinExistence type="evidence at protein level"/>
<evidence type="ECO:0000250" key="1">
    <source>
        <dbReference type="UniProtKB" id="Q13162"/>
    </source>
</evidence>
<evidence type="ECO:0000269" key="2">
    <source>
    </source>
</evidence>
<evidence type="ECO:0000305" key="3"/>
<keyword id="KW-0049">Antioxidant</keyword>
<keyword id="KW-0903">Direct protein sequencing</keyword>
<keyword id="KW-0560">Oxidoreductase</keyword>
<keyword id="KW-0575">Peroxidase</keyword>
<keyword id="KW-0676">Redox-active center</keyword>
<keyword id="KW-0964">Secreted</keyword>
<accession>P0CV91</accession>
<dbReference type="EC" id="1.11.1.24" evidence="1"/>
<dbReference type="SMR" id="P0CV91"/>
<dbReference type="GO" id="GO:0005829">
    <property type="term" value="C:cytosol"/>
    <property type="evidence" value="ECO:0007669"/>
    <property type="project" value="TreeGrafter"/>
</dbReference>
<dbReference type="GO" id="GO:0005783">
    <property type="term" value="C:endoplasmic reticulum"/>
    <property type="evidence" value="ECO:0007669"/>
    <property type="project" value="TreeGrafter"/>
</dbReference>
<dbReference type="GO" id="GO:0005576">
    <property type="term" value="C:extracellular region"/>
    <property type="evidence" value="ECO:0007669"/>
    <property type="project" value="UniProtKB-SubCell"/>
</dbReference>
<dbReference type="GO" id="GO:0008379">
    <property type="term" value="F:thioredoxin peroxidase activity"/>
    <property type="evidence" value="ECO:0007669"/>
    <property type="project" value="TreeGrafter"/>
</dbReference>
<dbReference type="GO" id="GO:0045454">
    <property type="term" value="P:cell redox homeostasis"/>
    <property type="evidence" value="ECO:0007669"/>
    <property type="project" value="TreeGrafter"/>
</dbReference>
<dbReference type="GO" id="GO:0033554">
    <property type="term" value="P:cellular response to stress"/>
    <property type="evidence" value="ECO:0007669"/>
    <property type="project" value="TreeGrafter"/>
</dbReference>
<dbReference type="GO" id="GO:0042744">
    <property type="term" value="P:hydrogen peroxide catabolic process"/>
    <property type="evidence" value="ECO:0007669"/>
    <property type="project" value="TreeGrafter"/>
</dbReference>
<dbReference type="GO" id="GO:0006979">
    <property type="term" value="P:response to oxidative stress"/>
    <property type="evidence" value="ECO:0007669"/>
    <property type="project" value="TreeGrafter"/>
</dbReference>
<dbReference type="Gene3D" id="3.40.30.10">
    <property type="entry name" value="Glutaredoxin"/>
    <property type="match status" value="1"/>
</dbReference>
<dbReference type="InterPro" id="IPR050217">
    <property type="entry name" value="Peroxiredoxin"/>
</dbReference>
<dbReference type="InterPro" id="IPR036249">
    <property type="entry name" value="Thioredoxin-like_sf"/>
</dbReference>
<dbReference type="PANTHER" id="PTHR10681:SF171">
    <property type="entry name" value="PEROXIREDOXIN 4"/>
    <property type="match status" value="1"/>
</dbReference>
<dbReference type="PANTHER" id="PTHR10681">
    <property type="entry name" value="THIOREDOXIN PEROXIDASE"/>
    <property type="match status" value="1"/>
</dbReference>
<dbReference type="SUPFAM" id="SSF52833">
    <property type="entry name" value="Thioredoxin-like"/>
    <property type="match status" value="1"/>
</dbReference>
<comment type="function">
    <text>Venom peroxiredoxin enzyme that may play a role as part of a redox pathway leading to the structural/functional diversification of toxins through a disulfide bond engineering mechanism.</text>
</comment>
<comment type="catalytic activity">
    <reaction evidence="1">
        <text>a hydroperoxide + [thioredoxin]-dithiol = an alcohol + [thioredoxin]-disulfide + H2O</text>
        <dbReference type="Rhea" id="RHEA:62620"/>
        <dbReference type="Rhea" id="RHEA-COMP:10698"/>
        <dbReference type="Rhea" id="RHEA-COMP:10700"/>
        <dbReference type="ChEBI" id="CHEBI:15377"/>
        <dbReference type="ChEBI" id="CHEBI:29950"/>
        <dbReference type="ChEBI" id="CHEBI:30879"/>
        <dbReference type="ChEBI" id="CHEBI:35924"/>
        <dbReference type="ChEBI" id="CHEBI:50058"/>
        <dbReference type="EC" id="1.11.1.24"/>
    </reaction>
</comment>
<comment type="subunit">
    <text evidence="1">Homodimer; disulfide-linked, upon oxidation.</text>
</comment>
<comment type="subcellular location">
    <subcellularLocation>
        <location evidence="2">Secreted</location>
    </subcellularLocation>
</comment>
<comment type="tissue specificity">
    <text>Venom gland.</text>
</comment>
<comment type="miscellaneous">
    <text evidence="1">The active site is a conserved redox-active cysteine residue, the peroxidatic cysteine (C(P)), which makes the nucleophilic attack on the peroxide substrate. The peroxide oxidizes the C(P)-SH to cysteine sulfenic acid (C(P)-SOH), which then reacts with another cysteine residue, the resolving cysteine (C(R)), to form a disulfide bridge. The disulfide is subsequently reduced by an appropriate electron donor to complete the catalytic cycle. In this typical 2-Cys peroxiredoxin, C(R) is provided by the other dimeric subunit to form an intersubunit disulfide. The disulfide is subsequently reduced by thioredoxin.</text>
</comment>
<comment type="similarity">
    <text evidence="3">Belongs to the peroxiredoxin family. AhpC/Prx1 subfamily.</text>
</comment>
<feature type="chain" id="PRO_0000407591" description="Peroxiredoxin-4">
    <location>
        <begin position="1" status="less than"/>
        <end position="36" status="greater than"/>
    </location>
</feature>
<feature type="non-consecutive residues" evidence="3">
    <location>
        <begin position="8"/>
        <end position="9"/>
    </location>
</feature>
<feature type="non-terminal residue">
    <location>
        <position position="1"/>
    </location>
</feature>
<feature type="non-terminal residue">
    <location>
        <position position="36"/>
    </location>
</feature>
<sequence length="36" mass="4141">GLFIIDDKQITMNDLPVGRSVDETLRLVQAFQYTDK</sequence>
<protein>
    <recommendedName>
        <fullName>Peroxiredoxin-4</fullName>
        <ecNumber evidence="1">1.11.1.24</ecNumber>
    </recommendedName>
    <alternativeName>
        <fullName evidence="3">Thioredoxin-dependent peroxiredoxin 4</fullName>
    </alternativeName>
</protein>
<reference key="1">
    <citation type="journal article" date="2009" name="J. Proteome Res.">
        <title>Exploring the venom proteome of the western diamondback rattlesnake, Crotalus atrox, via snake venomics and combinatorial peptide ligand library approaches.</title>
        <authorList>
            <person name="Calvete J.J."/>
            <person name="Fasoli E."/>
            <person name="Sanz L."/>
            <person name="Boschetti E."/>
            <person name="Righetti P.G."/>
        </authorList>
    </citation>
    <scope>PROTEIN SEQUENCE</scope>
    <scope>SUBCELLULAR LOCATION</scope>
    <scope>IDENTIFICATION BY MASS SPECTROMETRY</scope>
    <source>
        <tissue>Venom</tissue>
    </source>
</reference>
<name>PRDX4_CROAT</name>
<organism>
    <name type="scientific">Crotalus atrox</name>
    <name type="common">Western diamondback rattlesnake</name>
    <dbReference type="NCBI Taxonomy" id="8730"/>
    <lineage>
        <taxon>Eukaryota</taxon>
        <taxon>Metazoa</taxon>
        <taxon>Chordata</taxon>
        <taxon>Craniata</taxon>
        <taxon>Vertebrata</taxon>
        <taxon>Euteleostomi</taxon>
        <taxon>Lepidosauria</taxon>
        <taxon>Squamata</taxon>
        <taxon>Bifurcata</taxon>
        <taxon>Unidentata</taxon>
        <taxon>Episquamata</taxon>
        <taxon>Toxicofera</taxon>
        <taxon>Serpentes</taxon>
        <taxon>Colubroidea</taxon>
        <taxon>Viperidae</taxon>
        <taxon>Crotalinae</taxon>
        <taxon>Crotalus</taxon>
    </lineage>
</organism>